<name>DERPC_MOUSE</name>
<dbReference type="EMBL" id="AK030924">
    <property type="protein sequence ID" value="BAC27186.1"/>
    <property type="molecule type" value="mRNA"/>
</dbReference>
<dbReference type="EMBL" id="AK088257">
    <property type="protein sequence ID" value="BAC40241.1"/>
    <property type="molecule type" value="mRNA"/>
</dbReference>
<dbReference type="EMBL" id="AK165993">
    <property type="protein sequence ID" value="BAE38506.1"/>
    <property type="molecule type" value="mRNA"/>
</dbReference>
<dbReference type="EMBL" id="AC140328">
    <property type="status" value="NOT_ANNOTATED_CDS"/>
    <property type="molecule type" value="Genomic_DNA"/>
</dbReference>
<dbReference type="EMBL" id="BC023107">
    <property type="protein sequence ID" value="AAH23107.1"/>
    <property type="molecule type" value="mRNA"/>
</dbReference>
<dbReference type="RefSeq" id="NP_001365305.1">
    <property type="nucleotide sequence ID" value="NM_001378376.1"/>
</dbReference>
<dbReference type="RefSeq" id="NP_001365306.1">
    <property type="nucleotide sequence ID" value="NM_001378377.1"/>
</dbReference>
<dbReference type="RefSeq" id="NP_001365307.1">
    <property type="nucleotide sequence ID" value="NM_001378378.1"/>
</dbReference>
<dbReference type="RefSeq" id="NP_001365308.1">
    <property type="nucleotide sequence ID" value="NM_001378379.1"/>
</dbReference>
<dbReference type="RefSeq" id="NP_663387.3">
    <property type="nucleotide sequence ID" value="NM_145412.3"/>
</dbReference>
<dbReference type="RefSeq" id="XP_017168143.1">
    <property type="nucleotide sequence ID" value="XM_017312654.1"/>
</dbReference>
<dbReference type="RefSeq" id="XP_017168144.1">
    <property type="nucleotide sequence ID" value="XM_017312655.1"/>
</dbReference>
<dbReference type="RefSeq" id="XP_017168145.1">
    <property type="nucleotide sequence ID" value="XM_017312656.1"/>
</dbReference>
<dbReference type="BioGRID" id="229585">
    <property type="interactions" value="2"/>
</dbReference>
<dbReference type="FunCoup" id="P0CG14">
    <property type="interactions" value="6"/>
</dbReference>
<dbReference type="GlyGen" id="P0CG14">
    <property type="glycosylation" value="4 sites, 1 O-linked glycan (3 sites)"/>
</dbReference>
<dbReference type="iPTMnet" id="P0CG14"/>
<dbReference type="PhosphoSitePlus" id="P0CG14"/>
<dbReference type="jPOST" id="P0CG14"/>
<dbReference type="PaxDb" id="10090-ENSMUSP00000129823"/>
<dbReference type="PeptideAtlas" id="P0CG14"/>
<dbReference type="ProteomicsDB" id="285392"/>
<dbReference type="Pumba" id="P0CG14"/>
<dbReference type="Ensembl" id="ENSMUST00000169312.2">
    <property type="protein sequence ID" value="ENSMUSP00000129823.2"/>
    <property type="gene ID" value="ENSMUSG00000117748.2"/>
</dbReference>
<dbReference type="GeneID" id="116621581"/>
<dbReference type="GeneID" id="214987"/>
<dbReference type="KEGG" id="mmu:214987"/>
<dbReference type="UCSC" id="uc009ngq.1">
    <property type="organism name" value="mouse"/>
</dbReference>
<dbReference type="CTD" id="54921"/>
<dbReference type="VEuPathDB" id="HostDB:ENSMUSG00000117748"/>
<dbReference type="eggNOG" id="ENOG502SV5R">
    <property type="taxonomic scope" value="Eukaryota"/>
</dbReference>
<dbReference type="GeneTree" id="ENSGT00650000093476"/>
<dbReference type="HOGENOM" id="CLU_036906_1_0_1"/>
<dbReference type="InParanoid" id="P0CG14"/>
<dbReference type="OMA" id="TGVNPQI"/>
<dbReference type="OrthoDB" id="9833216at2759"/>
<dbReference type="PhylomeDB" id="P0CG14"/>
<dbReference type="TreeFam" id="TF338736"/>
<dbReference type="BioGRID-ORCS" id="214987">
    <property type="hits" value="15 hits in 78 CRISPR screens"/>
</dbReference>
<dbReference type="CD-CODE" id="CE726F99">
    <property type="entry name" value="Postsynaptic density"/>
</dbReference>
<dbReference type="ChiTaRS" id="Chtf8">
    <property type="organism name" value="mouse"/>
</dbReference>
<dbReference type="PRO" id="PR:P0CG14"/>
<dbReference type="Proteomes" id="UP000000589">
    <property type="component" value="Chromosome 8"/>
</dbReference>
<dbReference type="RNAct" id="P0CG14">
    <property type="molecule type" value="protein"/>
</dbReference>
<dbReference type="Bgee" id="ENSMUSG00000117748">
    <property type="expression patterns" value="Expressed in epiblast (generic) and 62 other cell types or tissues"/>
</dbReference>
<dbReference type="GO" id="GO:0005654">
    <property type="term" value="C:nucleoplasm"/>
    <property type="evidence" value="ECO:0007669"/>
    <property type="project" value="Ensembl"/>
</dbReference>
<dbReference type="PANTHER" id="PTHR28605">
    <property type="entry name" value="CTF8, CHROMOSOME TRANSMISSION FIDELITY FACTOR 8 HOMOLOG (S. CEREVISIAE)"/>
    <property type="match status" value="1"/>
</dbReference>
<dbReference type="PANTHER" id="PTHR28605:SF2">
    <property type="entry name" value="DECREASED EXPRESSION IN RENAL AND PROSTATE CANCER PROTEIN"/>
    <property type="match status" value="1"/>
</dbReference>
<accession>P0CG14</accession>
<accession>P0C6T0</accession>
<accession>Q8BHM2</accession>
<accession>Q8R5A5</accession>
<evidence type="ECO:0000250" key="1">
    <source>
        <dbReference type="UniProtKB" id="B2RYL1"/>
    </source>
</evidence>
<evidence type="ECO:0000250" key="2">
    <source>
        <dbReference type="UniProtKB" id="P0CG12"/>
    </source>
</evidence>
<evidence type="ECO:0000256" key="3">
    <source>
        <dbReference type="SAM" id="MobiDB-lite"/>
    </source>
</evidence>
<evidence type="ECO:0000305" key="4"/>
<evidence type="ECO:0007744" key="5">
    <source>
    </source>
</evidence>
<comment type="function">
    <text evidence="2">Potential tumor suppressor.</text>
</comment>
<comment type="subcellular location">
    <subcellularLocation>
        <location evidence="2">Nucleus</location>
    </subcellularLocation>
</comment>
<comment type="similarity">
    <text evidence="4">Belongs to the DERPC family.</text>
</comment>
<keyword id="KW-0488">Methylation</keyword>
<keyword id="KW-0539">Nucleus</keyword>
<keyword id="KW-0597">Phosphoprotein</keyword>
<keyword id="KW-1185">Reference proteome</keyword>
<sequence length="533" mass="52244">MKEPRIFPRERPTPWTRAPLPPRGRLDGGPVMNAGHPMGVNSDPFLMAAGSLGGNLAPFPRNAAPFQNPSGSLASNPAHFAAGARDPGMTSFPRGMNPTGTGAVSFPRPGGLLGPGPGPGLNPRTGALPGPGPMSNPRLGGLPGPGPMANPRAGGLLGASPDPRSGGPMVPGCGPNMRAGVLSSGTGPPNPRPVGLGPGPSPNLRSSFLGTNPAPRSGMFPGPGLGPNPRACGLGPGLGPNPRAGGLGPGPNLDNRAGGLLGTGSGLNLRMAGPQGLDLAPILRAAGLLGTNSVSFSQASGNMGTNPPTMTRVPGPIGPNTGPSSRGLGLPGPNPSPMSRAPGPMGPNSAHFSRPGGPMGVNAGVFPRGTGSGGLNPNAFSQSSGTLASNPGTFQRSAGLQGSNQAVFPRASGPLGPNPANFPRATGLQGPSPAAFPRSAGPLGPGQVAFPRSAAGHLGSSPAGPVGINPAPFARPTGTLGLNPASFPRMNGPVGKTLVPFPRVGSLPGSNPAAFPRPGGPMAAMYPNGMLPP</sequence>
<protein>
    <recommendedName>
        <fullName evidence="2">Decreased expression in renal and prostate cancer protein</fullName>
    </recommendedName>
</protein>
<feature type="chain" id="PRO_0000326397" description="Decreased expression in renal and prostate cancer protein">
    <location>
        <begin position="1"/>
        <end position="533"/>
    </location>
</feature>
<feature type="region of interest" description="Disordered" evidence="3">
    <location>
        <begin position="1"/>
        <end position="31"/>
    </location>
</feature>
<feature type="region of interest" description="Disordered" evidence="3">
    <location>
        <begin position="67"/>
        <end position="164"/>
    </location>
</feature>
<feature type="region of interest" description="Disordered" evidence="3">
    <location>
        <begin position="177"/>
        <end position="259"/>
    </location>
</feature>
<feature type="region of interest" description="Disordered" evidence="3">
    <location>
        <begin position="299"/>
        <end position="350"/>
    </location>
</feature>
<feature type="compositionally biased region" description="Basic and acidic residues" evidence="3">
    <location>
        <begin position="1"/>
        <end position="12"/>
    </location>
</feature>
<feature type="compositionally biased region" description="Polar residues" evidence="3">
    <location>
        <begin position="299"/>
        <end position="309"/>
    </location>
</feature>
<feature type="modified residue" description="Phosphoserine" evidence="1">
    <location>
        <position position="160"/>
    </location>
</feature>
<feature type="modified residue" description="Asymmetric dimethylarginine" evidence="5">
    <location>
        <position position="368"/>
    </location>
</feature>
<feature type="modified residue" description="Omega-N-methylarginine" evidence="5">
    <location>
        <position position="396"/>
    </location>
</feature>
<feature type="modified residue" description="Phosphoserine" evidence="2">
    <location>
        <position position="432"/>
    </location>
</feature>
<feature type="sequence conflict" description="In Ref. 3; AAH23107." evidence="4" ref="3">
    <original>G</original>
    <variation>E</variation>
    <location>
        <position position="28"/>
    </location>
</feature>
<organism>
    <name type="scientific">Mus musculus</name>
    <name type="common">Mouse</name>
    <dbReference type="NCBI Taxonomy" id="10090"/>
    <lineage>
        <taxon>Eukaryota</taxon>
        <taxon>Metazoa</taxon>
        <taxon>Chordata</taxon>
        <taxon>Craniata</taxon>
        <taxon>Vertebrata</taxon>
        <taxon>Euteleostomi</taxon>
        <taxon>Mammalia</taxon>
        <taxon>Eutheria</taxon>
        <taxon>Euarchontoglires</taxon>
        <taxon>Glires</taxon>
        <taxon>Rodentia</taxon>
        <taxon>Myomorpha</taxon>
        <taxon>Muroidea</taxon>
        <taxon>Muridae</taxon>
        <taxon>Murinae</taxon>
        <taxon>Mus</taxon>
        <taxon>Mus</taxon>
    </lineage>
</organism>
<reference key="1">
    <citation type="journal article" date="2005" name="Science">
        <title>The transcriptional landscape of the mammalian genome.</title>
        <authorList>
            <person name="Carninci P."/>
            <person name="Kasukawa T."/>
            <person name="Katayama S."/>
            <person name="Gough J."/>
            <person name="Frith M.C."/>
            <person name="Maeda N."/>
            <person name="Oyama R."/>
            <person name="Ravasi T."/>
            <person name="Lenhard B."/>
            <person name="Wells C."/>
            <person name="Kodzius R."/>
            <person name="Shimokawa K."/>
            <person name="Bajic V.B."/>
            <person name="Brenner S.E."/>
            <person name="Batalov S."/>
            <person name="Forrest A.R."/>
            <person name="Zavolan M."/>
            <person name="Davis M.J."/>
            <person name="Wilming L.G."/>
            <person name="Aidinis V."/>
            <person name="Allen J.E."/>
            <person name="Ambesi-Impiombato A."/>
            <person name="Apweiler R."/>
            <person name="Aturaliya R.N."/>
            <person name="Bailey T.L."/>
            <person name="Bansal M."/>
            <person name="Baxter L."/>
            <person name="Beisel K.W."/>
            <person name="Bersano T."/>
            <person name="Bono H."/>
            <person name="Chalk A.M."/>
            <person name="Chiu K.P."/>
            <person name="Choudhary V."/>
            <person name="Christoffels A."/>
            <person name="Clutterbuck D.R."/>
            <person name="Crowe M.L."/>
            <person name="Dalla E."/>
            <person name="Dalrymple B.P."/>
            <person name="de Bono B."/>
            <person name="Della Gatta G."/>
            <person name="di Bernardo D."/>
            <person name="Down T."/>
            <person name="Engstrom P."/>
            <person name="Fagiolini M."/>
            <person name="Faulkner G."/>
            <person name="Fletcher C.F."/>
            <person name="Fukushima T."/>
            <person name="Furuno M."/>
            <person name="Futaki S."/>
            <person name="Gariboldi M."/>
            <person name="Georgii-Hemming P."/>
            <person name="Gingeras T.R."/>
            <person name="Gojobori T."/>
            <person name="Green R.E."/>
            <person name="Gustincich S."/>
            <person name="Harbers M."/>
            <person name="Hayashi Y."/>
            <person name="Hensch T.K."/>
            <person name="Hirokawa N."/>
            <person name="Hill D."/>
            <person name="Huminiecki L."/>
            <person name="Iacono M."/>
            <person name="Ikeo K."/>
            <person name="Iwama A."/>
            <person name="Ishikawa T."/>
            <person name="Jakt M."/>
            <person name="Kanapin A."/>
            <person name="Katoh M."/>
            <person name="Kawasawa Y."/>
            <person name="Kelso J."/>
            <person name="Kitamura H."/>
            <person name="Kitano H."/>
            <person name="Kollias G."/>
            <person name="Krishnan S.P."/>
            <person name="Kruger A."/>
            <person name="Kummerfeld S.K."/>
            <person name="Kurochkin I.V."/>
            <person name="Lareau L.F."/>
            <person name="Lazarevic D."/>
            <person name="Lipovich L."/>
            <person name="Liu J."/>
            <person name="Liuni S."/>
            <person name="McWilliam S."/>
            <person name="Madan Babu M."/>
            <person name="Madera M."/>
            <person name="Marchionni L."/>
            <person name="Matsuda H."/>
            <person name="Matsuzawa S."/>
            <person name="Miki H."/>
            <person name="Mignone F."/>
            <person name="Miyake S."/>
            <person name="Morris K."/>
            <person name="Mottagui-Tabar S."/>
            <person name="Mulder N."/>
            <person name="Nakano N."/>
            <person name="Nakauchi H."/>
            <person name="Ng P."/>
            <person name="Nilsson R."/>
            <person name="Nishiguchi S."/>
            <person name="Nishikawa S."/>
            <person name="Nori F."/>
            <person name="Ohara O."/>
            <person name="Okazaki Y."/>
            <person name="Orlando V."/>
            <person name="Pang K.C."/>
            <person name="Pavan W.J."/>
            <person name="Pavesi G."/>
            <person name="Pesole G."/>
            <person name="Petrovsky N."/>
            <person name="Piazza S."/>
            <person name="Reed J."/>
            <person name="Reid J.F."/>
            <person name="Ring B.Z."/>
            <person name="Ringwald M."/>
            <person name="Rost B."/>
            <person name="Ruan Y."/>
            <person name="Salzberg S.L."/>
            <person name="Sandelin A."/>
            <person name="Schneider C."/>
            <person name="Schoenbach C."/>
            <person name="Sekiguchi K."/>
            <person name="Semple C.A."/>
            <person name="Seno S."/>
            <person name="Sessa L."/>
            <person name="Sheng Y."/>
            <person name="Shibata Y."/>
            <person name="Shimada H."/>
            <person name="Shimada K."/>
            <person name="Silva D."/>
            <person name="Sinclair B."/>
            <person name="Sperling S."/>
            <person name="Stupka E."/>
            <person name="Sugiura K."/>
            <person name="Sultana R."/>
            <person name="Takenaka Y."/>
            <person name="Taki K."/>
            <person name="Tammoja K."/>
            <person name="Tan S.L."/>
            <person name="Tang S."/>
            <person name="Taylor M.S."/>
            <person name="Tegner J."/>
            <person name="Teichmann S.A."/>
            <person name="Ueda H.R."/>
            <person name="van Nimwegen E."/>
            <person name="Verardo R."/>
            <person name="Wei C.L."/>
            <person name="Yagi K."/>
            <person name="Yamanishi H."/>
            <person name="Zabarovsky E."/>
            <person name="Zhu S."/>
            <person name="Zimmer A."/>
            <person name="Hide W."/>
            <person name="Bult C."/>
            <person name="Grimmond S.M."/>
            <person name="Teasdale R.D."/>
            <person name="Liu E.T."/>
            <person name="Brusic V."/>
            <person name="Quackenbush J."/>
            <person name="Wahlestedt C."/>
            <person name="Mattick J.S."/>
            <person name="Hume D.A."/>
            <person name="Kai C."/>
            <person name="Sasaki D."/>
            <person name="Tomaru Y."/>
            <person name="Fukuda S."/>
            <person name="Kanamori-Katayama M."/>
            <person name="Suzuki M."/>
            <person name="Aoki J."/>
            <person name="Arakawa T."/>
            <person name="Iida J."/>
            <person name="Imamura K."/>
            <person name="Itoh M."/>
            <person name="Kato T."/>
            <person name="Kawaji H."/>
            <person name="Kawagashira N."/>
            <person name="Kawashima T."/>
            <person name="Kojima M."/>
            <person name="Kondo S."/>
            <person name="Konno H."/>
            <person name="Nakano K."/>
            <person name="Ninomiya N."/>
            <person name="Nishio T."/>
            <person name="Okada M."/>
            <person name="Plessy C."/>
            <person name="Shibata K."/>
            <person name="Shiraki T."/>
            <person name="Suzuki S."/>
            <person name="Tagami M."/>
            <person name="Waki K."/>
            <person name="Watahiki A."/>
            <person name="Okamura-Oho Y."/>
            <person name="Suzuki H."/>
            <person name="Kawai J."/>
            <person name="Hayashizaki Y."/>
        </authorList>
    </citation>
    <scope>NUCLEOTIDE SEQUENCE [LARGE SCALE MRNA]</scope>
    <source>
        <tissue>Lung</tissue>
    </source>
</reference>
<reference key="2">
    <citation type="journal article" date="2009" name="PLoS Biol.">
        <title>Lineage-specific biology revealed by a finished genome assembly of the mouse.</title>
        <authorList>
            <person name="Church D.M."/>
            <person name="Goodstadt L."/>
            <person name="Hillier L.W."/>
            <person name="Zody M.C."/>
            <person name="Goldstein S."/>
            <person name="She X."/>
            <person name="Bult C.J."/>
            <person name="Agarwala R."/>
            <person name="Cherry J.L."/>
            <person name="DiCuccio M."/>
            <person name="Hlavina W."/>
            <person name="Kapustin Y."/>
            <person name="Meric P."/>
            <person name="Maglott D."/>
            <person name="Birtle Z."/>
            <person name="Marques A.C."/>
            <person name="Graves T."/>
            <person name="Zhou S."/>
            <person name="Teague B."/>
            <person name="Potamousis K."/>
            <person name="Churas C."/>
            <person name="Place M."/>
            <person name="Herschleb J."/>
            <person name="Runnheim R."/>
            <person name="Forrest D."/>
            <person name="Amos-Landgraf J."/>
            <person name="Schwartz D.C."/>
            <person name="Cheng Z."/>
            <person name="Lindblad-Toh K."/>
            <person name="Eichler E.E."/>
            <person name="Ponting C.P."/>
        </authorList>
    </citation>
    <scope>NUCLEOTIDE SEQUENCE [LARGE SCALE GENOMIC DNA]</scope>
    <source>
        <strain>C57BL/6J</strain>
    </source>
</reference>
<reference key="3">
    <citation type="journal article" date="2004" name="Genome Res.">
        <title>The status, quality, and expansion of the NIH full-length cDNA project: the Mammalian Gene Collection (MGC).</title>
        <authorList>
            <consortium name="The MGC Project Team"/>
        </authorList>
    </citation>
    <scope>NUCLEOTIDE SEQUENCE [LARGE SCALE MRNA]</scope>
    <source>
        <strain>FVB/N</strain>
        <tissue>Mammary tumor</tissue>
    </source>
</reference>
<reference key="4">
    <citation type="journal article" date="2014" name="Mol. Cell. Proteomics">
        <title>Immunoaffinity enrichment and mass spectrometry analysis of protein methylation.</title>
        <authorList>
            <person name="Guo A."/>
            <person name="Gu H."/>
            <person name="Zhou J."/>
            <person name="Mulhern D."/>
            <person name="Wang Y."/>
            <person name="Lee K.A."/>
            <person name="Yang V."/>
            <person name="Aguiar M."/>
            <person name="Kornhauser J."/>
            <person name="Jia X."/>
            <person name="Ren J."/>
            <person name="Beausoleil S.A."/>
            <person name="Silva J.C."/>
            <person name="Vemulapalli V."/>
            <person name="Bedford M.T."/>
            <person name="Comb M.J."/>
        </authorList>
    </citation>
    <scope>METHYLATION [LARGE SCALE ANALYSIS] AT ARG-368 AND ARG-396</scope>
    <scope>IDENTIFICATION BY MASS SPECTROMETRY [LARGE SCALE ANALYSIS]</scope>
    <source>
        <tissue>Brain</tissue>
        <tissue>Embryo</tissue>
    </source>
</reference>
<proteinExistence type="evidence at protein level"/>
<gene>
    <name evidence="2" type="primary">Derpc</name>
</gene>